<accession>P09721</accession>
<accession>Q7M6I8</accession>
<keyword id="KW-0472">Membrane</keyword>
<keyword id="KW-1185">Reference proteome</keyword>
<keyword id="KW-0812">Transmembrane</keyword>
<keyword id="KW-1133">Transmembrane helix</keyword>
<organism>
    <name type="scientific">Human cytomegalovirus (strain AD169)</name>
    <name type="common">HHV-5</name>
    <name type="synonym">Human herpesvirus 5</name>
    <dbReference type="NCBI Taxonomy" id="10360"/>
    <lineage>
        <taxon>Viruses</taxon>
        <taxon>Duplodnaviria</taxon>
        <taxon>Heunggongvirae</taxon>
        <taxon>Peploviricota</taxon>
        <taxon>Herviviricetes</taxon>
        <taxon>Herpesvirales</taxon>
        <taxon>Orthoherpesviridae</taxon>
        <taxon>Betaherpesvirinae</taxon>
        <taxon>Cytomegalovirus</taxon>
        <taxon>Cytomegalovirus humanbeta5</taxon>
        <taxon>Human cytomegalovirus</taxon>
    </lineage>
</organism>
<feature type="chain" id="PRO_0000115271" description="Uncharacterized protein HVLF6">
    <location>
        <begin position="1"/>
        <end position="281"/>
    </location>
</feature>
<feature type="transmembrane region" description="Helical" evidence="1">
    <location>
        <begin position="58"/>
        <end position="78"/>
    </location>
</feature>
<feature type="transmembrane region" description="Helical" evidence="1">
    <location>
        <begin position="88"/>
        <end position="107"/>
    </location>
</feature>
<feature type="transmembrane region" description="Helical" evidence="1">
    <location>
        <begin position="117"/>
        <end position="137"/>
    </location>
</feature>
<feature type="transmembrane region" description="Helical" evidence="1">
    <location>
        <begin position="145"/>
        <end position="165"/>
    </location>
</feature>
<feature type="transmembrane region" description="Helical" evidence="1">
    <location>
        <begin position="171"/>
        <end position="191"/>
    </location>
</feature>
<feature type="transmembrane region" description="Helical" evidence="1">
    <location>
        <begin position="196"/>
        <end position="216"/>
    </location>
</feature>
<feature type="transmembrane region" description="Helical" evidence="1">
    <location>
        <begin position="248"/>
        <end position="268"/>
    </location>
</feature>
<feature type="region of interest" description="Disordered" evidence="2">
    <location>
        <begin position="11"/>
        <end position="30"/>
    </location>
</feature>
<feature type="compositionally biased region" description="Pro residues" evidence="2">
    <location>
        <begin position="20"/>
        <end position="30"/>
    </location>
</feature>
<organismHost>
    <name type="scientific">Homo sapiens</name>
    <name type="common">Human</name>
    <dbReference type="NCBI Taxonomy" id="9606"/>
</organismHost>
<protein>
    <recommendedName>
        <fullName>Uncharacterized protein HVLF6</fullName>
    </recommendedName>
</protein>
<sequence>MVQIQFHQGEPLGHKKEKPPPVSPPSPPPIRRVTVITKDEDTLRSVQHFLWMVRLYGTVVFQTSATIATTILFMLIPWRVTAPYLRDTLPFWSTLLPCALRCHAYWLERRRRPGTLMLVMVYTTLTTISVSTIGLCFDRTVVIQAYVLSSMLCVWCTGLAWLMAWNMQRRLAILCLLSFMLPILWLFIAVQSWEPYQRIILALTVSFIYGLKIVLIRDTLTVLYRSPSNCYTDGDLLRTAMLLYMDQVIMFLLVVVPLTAPIWYPNYAGALGRTAHWLFHK</sequence>
<dbReference type="EMBL" id="X17403">
    <property type="protein sequence ID" value="CAA35279.1"/>
    <property type="molecule type" value="Genomic_DNA"/>
</dbReference>
<dbReference type="EMBL" id="X04650">
    <property type="protein sequence ID" value="CAB37104.1"/>
    <property type="molecule type" value="Genomic_DNA"/>
</dbReference>
<dbReference type="EMBL" id="BK000394">
    <property type="protein sequence ID" value="DAA00200.1"/>
    <property type="molecule type" value="Genomic_DNA"/>
</dbReference>
<dbReference type="PIR" id="D27230">
    <property type="entry name" value="QQBEF4"/>
</dbReference>
<dbReference type="Proteomes" id="UP000008991">
    <property type="component" value="Segment"/>
</dbReference>
<dbReference type="Proteomes" id="UP000008992">
    <property type="component" value="Segment"/>
</dbReference>
<dbReference type="GO" id="GO:0016020">
    <property type="term" value="C:membrane"/>
    <property type="evidence" value="ECO:0007669"/>
    <property type="project" value="UniProtKB-SubCell"/>
</dbReference>
<dbReference type="InterPro" id="IPR006214">
    <property type="entry name" value="Bax_inhibitor_1-related"/>
</dbReference>
<dbReference type="Pfam" id="PF01027">
    <property type="entry name" value="Bax1-I"/>
    <property type="match status" value="1"/>
</dbReference>
<reference key="1">
    <citation type="journal article" date="1986" name="J. Mol. Biol.">
        <title>Sequence of the short unique region, short repeats, and part of the long repeats of human cytomegalovirus.</title>
        <authorList>
            <person name="Weston K.M."/>
            <person name="Barrell B.G."/>
        </authorList>
    </citation>
    <scope>NUCLEOTIDE SEQUENCE [GENOMIC DNA]</scope>
</reference>
<reference key="2">
    <citation type="journal article" date="1990" name="Curr. Top. Microbiol. Immunol.">
        <title>Analysis of the protein-coding content of the sequence of human cytomegalovirus strain AD169.</title>
        <authorList>
            <person name="Chee M.S."/>
            <person name="Bankier A.T."/>
            <person name="Beck S."/>
            <person name="Bohni R."/>
            <person name="Brown C.M."/>
            <person name="Cerny R."/>
            <person name="Horsnell T."/>
            <person name="Hutchison C.A. III"/>
            <person name="Kouzarides T."/>
            <person name="Martignetti J.A."/>
            <person name="Preddie E."/>
            <person name="Satchwell S.C."/>
            <person name="Tomlinson P."/>
            <person name="Weston K.M."/>
            <person name="Barrell B.G."/>
        </authorList>
    </citation>
    <scope>NUCLEOTIDE SEQUENCE [LARGE SCALE GENOMIC DNA]</scope>
</reference>
<reference key="3">
    <citation type="journal article" date="2003" name="J. Gen. Virol.">
        <title>The human cytomegalovirus genome revisited: comparison with the chimpanzee cytomegalovirus genome.</title>
        <authorList>
            <person name="Davison A.J."/>
            <person name="Dolan A."/>
            <person name="Akter P."/>
            <person name="Addison C."/>
            <person name="Dargan D.J."/>
            <person name="Alcendor D.J."/>
            <person name="McGeoch D.J."/>
            <person name="Hayward G.S."/>
        </authorList>
    </citation>
    <scope>GENOME REANNOTATION</scope>
</reference>
<reference key="4">
    <citation type="journal article" date="2003" name="J. Gen. Virol.">
        <authorList>
            <person name="Davison A.J."/>
            <person name="Dolan A."/>
            <person name="Akter P."/>
            <person name="Addison C."/>
            <person name="Dargan D.J."/>
            <person name="Alcendor D.J."/>
            <person name="McGeoch D.J."/>
            <person name="Hayward G.S."/>
        </authorList>
    </citation>
    <scope>ERRATUM OF PUBMED:12533697</scope>
</reference>
<name>US12_HCMVA</name>
<comment type="subcellular location">
    <subcellularLocation>
        <location evidence="3">Membrane</location>
        <topology evidence="3">Multi-pass membrane protein</topology>
    </subcellularLocation>
</comment>
<comment type="similarity">
    <text evidence="3">Belongs to the cytomegalovirus US12 family.</text>
</comment>
<evidence type="ECO:0000255" key="1"/>
<evidence type="ECO:0000256" key="2">
    <source>
        <dbReference type="SAM" id="MobiDB-lite"/>
    </source>
</evidence>
<evidence type="ECO:0000305" key="3"/>
<proteinExistence type="inferred from homology"/>
<gene>
    <name type="primary">US12</name>
</gene>